<keyword id="KW-1185">Reference proteome</keyword>
<keyword id="KW-0694">RNA-binding</keyword>
<keyword id="KW-0804">Transcription</keyword>
<keyword id="KW-0889">Transcription antitermination</keyword>
<keyword id="KW-0805">Transcription regulation</keyword>
<protein>
    <recommendedName>
        <fullName evidence="1">Transcription antitermination protein NusB</fullName>
    </recommendedName>
    <alternativeName>
        <fullName evidence="1">Antitermination factor NusB</fullName>
    </alternativeName>
</protein>
<gene>
    <name evidence="1" type="primary">nusB</name>
    <name type="ordered locus">LHK_02388</name>
</gene>
<dbReference type="EMBL" id="CP001154">
    <property type="protein sequence ID" value="ACO75370.1"/>
    <property type="molecule type" value="Genomic_DNA"/>
</dbReference>
<dbReference type="RefSeq" id="WP_012697856.1">
    <property type="nucleotide sequence ID" value="NC_012559.1"/>
</dbReference>
<dbReference type="SMR" id="C1DB31"/>
<dbReference type="STRING" id="557598.LHK_02388"/>
<dbReference type="GeneID" id="75109972"/>
<dbReference type="KEGG" id="lhk:LHK_02388"/>
<dbReference type="eggNOG" id="COG0781">
    <property type="taxonomic scope" value="Bacteria"/>
</dbReference>
<dbReference type="HOGENOM" id="CLU_087843_4_1_4"/>
<dbReference type="Proteomes" id="UP000002010">
    <property type="component" value="Chromosome"/>
</dbReference>
<dbReference type="GO" id="GO:0005829">
    <property type="term" value="C:cytosol"/>
    <property type="evidence" value="ECO:0007669"/>
    <property type="project" value="TreeGrafter"/>
</dbReference>
<dbReference type="GO" id="GO:0003723">
    <property type="term" value="F:RNA binding"/>
    <property type="evidence" value="ECO:0007669"/>
    <property type="project" value="UniProtKB-UniRule"/>
</dbReference>
<dbReference type="GO" id="GO:0006353">
    <property type="term" value="P:DNA-templated transcription termination"/>
    <property type="evidence" value="ECO:0007669"/>
    <property type="project" value="UniProtKB-UniRule"/>
</dbReference>
<dbReference type="GO" id="GO:0031564">
    <property type="term" value="P:transcription antitermination"/>
    <property type="evidence" value="ECO:0007669"/>
    <property type="project" value="UniProtKB-KW"/>
</dbReference>
<dbReference type="Gene3D" id="1.10.940.10">
    <property type="entry name" value="NusB-like"/>
    <property type="match status" value="1"/>
</dbReference>
<dbReference type="HAMAP" id="MF_00073">
    <property type="entry name" value="NusB"/>
    <property type="match status" value="1"/>
</dbReference>
<dbReference type="InterPro" id="IPR035926">
    <property type="entry name" value="NusB-like_sf"/>
</dbReference>
<dbReference type="InterPro" id="IPR011605">
    <property type="entry name" value="NusB_fam"/>
</dbReference>
<dbReference type="InterPro" id="IPR006027">
    <property type="entry name" value="NusB_RsmB_TIM44"/>
</dbReference>
<dbReference type="NCBIfam" id="TIGR01951">
    <property type="entry name" value="nusB"/>
    <property type="match status" value="1"/>
</dbReference>
<dbReference type="PANTHER" id="PTHR11078:SF3">
    <property type="entry name" value="ANTITERMINATION NUSB DOMAIN-CONTAINING PROTEIN"/>
    <property type="match status" value="1"/>
</dbReference>
<dbReference type="PANTHER" id="PTHR11078">
    <property type="entry name" value="N UTILIZATION SUBSTANCE PROTEIN B-RELATED"/>
    <property type="match status" value="1"/>
</dbReference>
<dbReference type="Pfam" id="PF01029">
    <property type="entry name" value="NusB"/>
    <property type="match status" value="1"/>
</dbReference>
<dbReference type="SUPFAM" id="SSF48013">
    <property type="entry name" value="NusB-like"/>
    <property type="match status" value="1"/>
</dbReference>
<comment type="function">
    <text evidence="1">Involved in transcription antitermination. Required for transcription of ribosomal RNA (rRNA) genes. Binds specifically to the boxA antiterminator sequence of the ribosomal RNA (rrn) operons.</text>
</comment>
<comment type="similarity">
    <text evidence="1">Belongs to the NusB family.</text>
</comment>
<sequence length="165" mass="18453">MKTPRRRAREFAVQGIYQWQLNALTPATIEKNLRDNEQFAKADEALFRTLLYGVLNDPVRIESAIASHFERAPEDVSPVERAVLLMAAFELTQQAETPLAVIINEAIEIAKTFGGAEGHRFVNGVLDKYAAEVRPEEFEAVRSHRRNKRPAADKPVATDKPAAAE</sequence>
<reference key="1">
    <citation type="journal article" date="2009" name="PLoS Genet.">
        <title>The complete genome and proteome of Laribacter hongkongensis reveal potential mechanisms for adaptations to different temperatures and habitats.</title>
        <authorList>
            <person name="Woo P.C.Y."/>
            <person name="Lau S.K.P."/>
            <person name="Tse H."/>
            <person name="Teng J.L.L."/>
            <person name="Curreem S.O."/>
            <person name="Tsang A.K.L."/>
            <person name="Fan R.Y.Y."/>
            <person name="Wong G.K.M."/>
            <person name="Huang Y."/>
            <person name="Loman N.J."/>
            <person name="Snyder L.A.S."/>
            <person name="Cai J.J."/>
            <person name="Huang J.-D."/>
            <person name="Mak W."/>
            <person name="Pallen M.J."/>
            <person name="Lok S."/>
            <person name="Yuen K.-Y."/>
        </authorList>
    </citation>
    <scope>NUCLEOTIDE SEQUENCE [LARGE SCALE GENOMIC DNA]</scope>
    <source>
        <strain>HLHK9</strain>
    </source>
</reference>
<organism>
    <name type="scientific">Laribacter hongkongensis (strain HLHK9)</name>
    <dbReference type="NCBI Taxonomy" id="557598"/>
    <lineage>
        <taxon>Bacteria</taxon>
        <taxon>Pseudomonadati</taxon>
        <taxon>Pseudomonadota</taxon>
        <taxon>Betaproteobacteria</taxon>
        <taxon>Neisseriales</taxon>
        <taxon>Aquaspirillaceae</taxon>
        <taxon>Laribacter</taxon>
    </lineage>
</organism>
<evidence type="ECO:0000255" key="1">
    <source>
        <dbReference type="HAMAP-Rule" id="MF_00073"/>
    </source>
</evidence>
<evidence type="ECO:0000256" key="2">
    <source>
        <dbReference type="SAM" id="MobiDB-lite"/>
    </source>
</evidence>
<name>NUSB_LARHH</name>
<feature type="chain" id="PRO_1000192445" description="Transcription antitermination protein NusB">
    <location>
        <begin position="1"/>
        <end position="165"/>
    </location>
</feature>
<feature type="region of interest" description="Disordered" evidence="2">
    <location>
        <begin position="139"/>
        <end position="165"/>
    </location>
</feature>
<accession>C1DB31</accession>
<proteinExistence type="inferred from homology"/>